<organism>
    <name type="scientific">Mus musculus</name>
    <name type="common">Mouse</name>
    <dbReference type="NCBI Taxonomy" id="10090"/>
    <lineage>
        <taxon>Eukaryota</taxon>
        <taxon>Metazoa</taxon>
        <taxon>Chordata</taxon>
        <taxon>Craniata</taxon>
        <taxon>Vertebrata</taxon>
        <taxon>Euteleostomi</taxon>
        <taxon>Mammalia</taxon>
        <taxon>Eutheria</taxon>
        <taxon>Euarchontoglires</taxon>
        <taxon>Glires</taxon>
        <taxon>Rodentia</taxon>
        <taxon>Myomorpha</taxon>
        <taxon>Muroidea</taxon>
        <taxon>Muridae</taxon>
        <taxon>Murinae</taxon>
        <taxon>Mus</taxon>
        <taxon>Mus</taxon>
    </lineage>
</organism>
<proteinExistence type="evidence at protein level"/>
<feature type="signal peptide" evidence="2">
    <location>
        <begin position="1"/>
        <end position="21"/>
    </location>
</feature>
<feature type="chain" id="PRO_0000015620" description="Interleukin-11">
    <location>
        <begin position="22"/>
        <end position="199"/>
    </location>
</feature>
<feature type="region of interest" description="Important for interaction with IL11RA and for the stimulation of cell proliferation" evidence="1 7">
    <location>
        <begin position="182"/>
        <end position="190"/>
    </location>
</feature>
<feature type="site" description="Important for interaction with IL6ST and for the stimulation of cell proliferation" evidence="3">
    <location>
        <position position="168"/>
    </location>
</feature>
<feature type="mutagenesis site" description="Slightly increases IL11RA binding. Abolishes interaction with IL6ST. Abolishes stimulation of cell proliferation." evidence="3">
    <original>W</original>
    <variation>A</variation>
    <location>
        <position position="168"/>
    </location>
</feature>
<feature type="mutagenesis site" description="No effect on IL11RA binding. Decreases stimulation of cell proliferation." evidence="3">
    <original>R</original>
    <variation>A</variation>
    <location>
        <position position="172"/>
    </location>
</feature>
<feature type="mutagenesis site" description="Srongly reduces IL11RA binding and stimulation of cell proliferation." evidence="3">
    <original>R</original>
    <variation>A</variation>
    <location>
        <position position="190"/>
    </location>
</feature>
<feature type="mutagenesis site" description="Impairs IL11RA binding and mildly reduces stimulation of cell proliferation." evidence="3">
    <original>L</original>
    <variation>A</variation>
    <location>
        <position position="193"/>
    </location>
</feature>
<comment type="function">
    <text evidence="1 3 4 5 6">Cytokine that stimulates the proliferation of hematopoietic stem cells and megakaryocyte progenitor cells and induces megakaryocyte maturation resulting in increased platelet production (PubMed:8913282). Also promotes the proliferation of hepatocytes in response to liver damage (PubMed:22253262). Binding to its receptor formed by IL6ST and either IL11RA1 or IL11RA2 activates a signaling cascade that promotes cell proliferation, also in the context of various cancers (PubMed:10026196, PubMed:23948300). Signaling leads to the activation of intracellular protein kinases and the phosphorylation of STAT3 (PubMed:22253262, PubMed:23948300). The interaction with the membrane-bound IL11RA and IL6ST stimulates 'classic signaling', whereas the binding of IL11 and soluble IL11RA to IL6ST stimulates 'trans-signaling' (By similarity).</text>
</comment>
<comment type="subunit">
    <text evidence="3">Interacts with either IL11RA1 or IL11RA2 to associate with IL6ST, giving rise to a multimeric signaling complex.</text>
</comment>
<comment type="subcellular location">
    <subcellularLocation>
        <location evidence="4">Secreted</location>
    </subcellularLocation>
</comment>
<comment type="induction">
    <text evidence="4">Up-regulated in hepatocytes by oxidative stress caused by liver damage.</text>
</comment>
<comment type="similarity">
    <text evidence="7">Belongs to the IL-6 superfamily.</text>
</comment>
<sequence>MNCVCRLVLVVLSLWPDRVVAPGPPAGSPRVSSDPRADLDSAVLLTRSLLADTRQLAAQMRDKFPADGDHSLDSLPTLAMSAGTLGSLQLPGVLTRLRVDLMSYLRHVQWLRRAGGPSLKTLEPELGALQARLERLLRRLQLLMSRLALPQAAPDQPVIPLGPPASAWGSIRAAHAILGGLHLTLDWAVRGLLLLKTRL</sequence>
<keyword id="KW-0202">Cytokine</keyword>
<keyword id="KW-0339">Growth factor</keyword>
<keyword id="KW-1185">Reference proteome</keyword>
<keyword id="KW-0964">Secreted</keyword>
<keyword id="KW-0732">Signal</keyword>
<dbReference type="EMBL" id="U03421">
    <property type="protein sequence ID" value="AAC52941.1"/>
    <property type="molecule type" value="mRNA"/>
</dbReference>
<dbReference type="CCDS" id="CCDS39740.1"/>
<dbReference type="RefSeq" id="NP_032376.1">
    <property type="nucleotide sequence ID" value="NM_008350.5"/>
</dbReference>
<dbReference type="SMR" id="P47873"/>
<dbReference type="DIP" id="DIP-5780N"/>
<dbReference type="FunCoup" id="P47873">
    <property type="interactions" value="478"/>
</dbReference>
<dbReference type="IntAct" id="P47873">
    <property type="interactions" value="1"/>
</dbReference>
<dbReference type="STRING" id="10090.ENSMUSP00000092492"/>
<dbReference type="PhosphoSitePlus" id="P47873"/>
<dbReference type="PaxDb" id="10090-ENSMUSP00000092492"/>
<dbReference type="Antibodypedia" id="19559">
    <property type="antibodies" value="486 antibodies from 37 providers"/>
</dbReference>
<dbReference type="DNASU" id="16156"/>
<dbReference type="Ensembl" id="ENSMUST00000094892.12">
    <property type="protein sequence ID" value="ENSMUSP00000092492.6"/>
    <property type="gene ID" value="ENSMUSG00000004371.16"/>
</dbReference>
<dbReference type="GeneID" id="16156"/>
<dbReference type="KEGG" id="mmu:16156"/>
<dbReference type="UCSC" id="uc009eyo.2">
    <property type="organism name" value="mouse"/>
</dbReference>
<dbReference type="AGR" id="MGI:107613"/>
<dbReference type="CTD" id="3589"/>
<dbReference type="MGI" id="MGI:107613">
    <property type="gene designation" value="Il11"/>
</dbReference>
<dbReference type="VEuPathDB" id="HostDB:ENSMUSG00000004371"/>
<dbReference type="eggNOG" id="ENOG502RZVA">
    <property type="taxonomic scope" value="Eukaryota"/>
</dbReference>
<dbReference type="GeneTree" id="ENSGT00390000007165"/>
<dbReference type="InParanoid" id="P47873"/>
<dbReference type="OMA" id="LLCYLWH"/>
<dbReference type="OrthoDB" id="9445483at2759"/>
<dbReference type="PhylomeDB" id="P47873"/>
<dbReference type="TreeFam" id="TF337294"/>
<dbReference type="Reactome" id="R-MMU-6788467">
    <property type="pathway name" value="IL-6-type cytokine receptor ligand interactions"/>
</dbReference>
<dbReference type="BioGRID-ORCS" id="16156">
    <property type="hits" value="2 hits in 80 CRISPR screens"/>
</dbReference>
<dbReference type="ChiTaRS" id="Il11">
    <property type="organism name" value="mouse"/>
</dbReference>
<dbReference type="PRO" id="PR:P47873"/>
<dbReference type="Proteomes" id="UP000000589">
    <property type="component" value="Chromosome 7"/>
</dbReference>
<dbReference type="RNAct" id="P47873">
    <property type="molecule type" value="protein"/>
</dbReference>
<dbReference type="Bgee" id="ENSMUSG00000004371">
    <property type="expression patterns" value="Expressed in gastrula and 62 other cell types or tissues"/>
</dbReference>
<dbReference type="ExpressionAtlas" id="P47873">
    <property type="expression patterns" value="baseline and differential"/>
</dbReference>
<dbReference type="GO" id="GO:0005737">
    <property type="term" value="C:cytoplasm"/>
    <property type="evidence" value="ECO:0000314"/>
    <property type="project" value="MGI"/>
</dbReference>
<dbReference type="GO" id="GO:0005615">
    <property type="term" value="C:extracellular space"/>
    <property type="evidence" value="ECO:0007669"/>
    <property type="project" value="UniProtKB-KW"/>
</dbReference>
<dbReference type="GO" id="GO:0005125">
    <property type="term" value="F:cytokine activity"/>
    <property type="evidence" value="ECO:0000314"/>
    <property type="project" value="MGI"/>
</dbReference>
<dbReference type="GO" id="GO:0008083">
    <property type="term" value="F:growth factor activity"/>
    <property type="evidence" value="ECO:0000250"/>
    <property type="project" value="UniProtKB"/>
</dbReference>
<dbReference type="GO" id="GO:0005142">
    <property type="term" value="F:interleukin-11 receptor binding"/>
    <property type="evidence" value="ECO:0000353"/>
    <property type="project" value="MGI"/>
</dbReference>
<dbReference type="GO" id="GO:0008283">
    <property type="term" value="P:cell population proliferation"/>
    <property type="evidence" value="ECO:0000314"/>
    <property type="project" value="MGI"/>
</dbReference>
<dbReference type="GO" id="GO:0038154">
    <property type="term" value="P:interleukin-11-mediated signaling pathway"/>
    <property type="evidence" value="ECO:0007669"/>
    <property type="project" value="Ensembl"/>
</dbReference>
<dbReference type="GO" id="GO:0046888">
    <property type="term" value="P:negative regulation of hormone secretion"/>
    <property type="evidence" value="ECO:0000266"/>
    <property type="project" value="MGI"/>
</dbReference>
<dbReference type="GO" id="GO:0008284">
    <property type="term" value="P:positive regulation of cell population proliferation"/>
    <property type="evidence" value="ECO:0000314"/>
    <property type="project" value="MGI"/>
</dbReference>
<dbReference type="GO" id="GO:0043410">
    <property type="term" value="P:positive regulation of MAPK cascade"/>
    <property type="evidence" value="ECO:0000266"/>
    <property type="project" value="MGI"/>
</dbReference>
<dbReference type="GO" id="GO:0045944">
    <property type="term" value="P:positive regulation of transcription by RNA polymerase II"/>
    <property type="evidence" value="ECO:0000266"/>
    <property type="project" value="MGI"/>
</dbReference>
<dbReference type="FunFam" id="1.20.1250.10:FF:000017">
    <property type="entry name" value="Interleukin 11"/>
    <property type="match status" value="1"/>
</dbReference>
<dbReference type="Gene3D" id="1.20.1250.10">
    <property type="match status" value="1"/>
</dbReference>
<dbReference type="InterPro" id="IPR009079">
    <property type="entry name" value="4_helix_cytokine-like_core"/>
</dbReference>
<dbReference type="InterPro" id="IPR020438">
    <property type="entry name" value="IL-11"/>
</dbReference>
<dbReference type="InterPro" id="IPR020412">
    <property type="entry name" value="IL-11_mml"/>
</dbReference>
<dbReference type="PANTHER" id="PTHR16922">
    <property type="entry name" value="INTERLEUKIN 11"/>
    <property type="match status" value="1"/>
</dbReference>
<dbReference type="PANTHER" id="PTHR16922:SF0">
    <property type="entry name" value="INTERLEUKIN-11"/>
    <property type="match status" value="1"/>
</dbReference>
<dbReference type="Pfam" id="PF07400">
    <property type="entry name" value="IL11"/>
    <property type="match status" value="1"/>
</dbReference>
<dbReference type="PRINTS" id="PR01943">
    <property type="entry name" value="INTLKN11MAML"/>
</dbReference>
<dbReference type="PRINTS" id="PR01927">
    <property type="entry name" value="INTRLEUKIN11"/>
</dbReference>
<dbReference type="SUPFAM" id="SSF47266">
    <property type="entry name" value="4-helical cytokines"/>
    <property type="match status" value="1"/>
</dbReference>
<gene>
    <name evidence="8" type="primary">Il11</name>
</gene>
<reference key="1">
    <citation type="journal article" date="1996" name="Exp. Hematol.">
        <title>Molecular cloning and characterization of murine interleukin-11.</title>
        <authorList>
            <person name="Morris J.C."/>
            <person name="Finnerty H."/>
            <person name="Bennet F."/>
            <person name="Turner K.J."/>
            <person name="Wood C.R."/>
        </authorList>
    </citation>
    <scope>NUCLEOTIDE SEQUENCE [MRNA]</scope>
    <scope>FUNCTION</scope>
</reference>
<reference key="2">
    <citation type="journal article" date="1999" name="J. Biol. Chem.">
        <title>Identification of three distinct receptor binding sites of murine interleukin-11.</title>
        <authorList>
            <person name="Barton V.A."/>
            <person name="Hudson K.R."/>
            <person name="Heath J.K."/>
        </authorList>
    </citation>
    <scope>FUNCTION</scope>
    <scope>MUTAGENESIS OF TRP-168; ARG-172; ARG-190 AND LEU-193</scope>
</reference>
<reference key="3">
    <citation type="journal article" date="2012" name="Sci. Signal.">
        <title>Interleukin-11 links oxidative stress and compensatory proliferation.</title>
        <authorList>
            <person name="Nishina T."/>
            <person name="Komazawa-Sakon S."/>
            <person name="Yanaka S."/>
            <person name="Piao X."/>
            <person name="Zheng D.M."/>
            <person name="Piao J.H."/>
            <person name="Kojima Y."/>
            <person name="Yamashina S."/>
            <person name="Sano E."/>
            <person name="Putoczki T."/>
            <person name="Doi T."/>
            <person name="Ueno T."/>
            <person name="Ezaki J."/>
            <person name="Ushio H."/>
            <person name="Ernst M."/>
            <person name="Tsumoto K."/>
            <person name="Okumura K."/>
            <person name="Nakano H."/>
        </authorList>
    </citation>
    <scope>FUNCTION</scope>
    <scope>SUBCELLULAR LOCATION</scope>
    <scope>INDUCTION BY OXIDATIVE STRESS</scope>
</reference>
<reference key="4">
    <citation type="journal article" date="2013" name="Cancer Cell">
        <title>Interleukin-11 is the dominant IL-6 family cytokine during gastrointestinal tumorigenesis and can be targeted therapeutically.</title>
        <authorList>
            <person name="Putoczki T.L."/>
            <person name="Thiem S."/>
            <person name="Loving A."/>
            <person name="Busuttil R.A."/>
            <person name="Wilson N.J."/>
            <person name="Ziegler P.K."/>
            <person name="Nguyen P.M."/>
            <person name="Preaudet A."/>
            <person name="Farid R."/>
            <person name="Edwards K.M."/>
            <person name="Boglev Y."/>
            <person name="Luwor R.B."/>
            <person name="Jarnicki A."/>
            <person name="Horst D."/>
            <person name="Boussioutas A."/>
            <person name="Heath J.K."/>
            <person name="Sieber O.M."/>
            <person name="Pleines I."/>
            <person name="Kile B.T."/>
            <person name="Nash A."/>
            <person name="Greten F.R."/>
            <person name="McKenzie B.S."/>
            <person name="Ernst M."/>
        </authorList>
    </citation>
    <scope>FUNCTION</scope>
</reference>
<accession>P47873</accession>
<evidence type="ECO:0000250" key="1">
    <source>
        <dbReference type="UniProtKB" id="P20809"/>
    </source>
</evidence>
<evidence type="ECO:0000255" key="2"/>
<evidence type="ECO:0000269" key="3">
    <source>
    </source>
</evidence>
<evidence type="ECO:0000269" key="4">
    <source>
    </source>
</evidence>
<evidence type="ECO:0000269" key="5">
    <source>
    </source>
</evidence>
<evidence type="ECO:0000269" key="6">
    <source>
    </source>
</evidence>
<evidence type="ECO:0000305" key="7"/>
<evidence type="ECO:0000312" key="8">
    <source>
        <dbReference type="MGI" id="MGI:107613"/>
    </source>
</evidence>
<protein>
    <recommendedName>
        <fullName evidence="7">Interleukin-11</fullName>
        <shortName>IL-11</shortName>
    </recommendedName>
</protein>
<name>IL11_MOUSE</name>